<proteinExistence type="evidence at protein level"/>
<reference key="1">
    <citation type="journal article" date="2000" name="Nature">
        <title>Sequence and analysis of chromosome 1 of the plant Arabidopsis thaliana.</title>
        <authorList>
            <person name="Theologis A."/>
            <person name="Ecker J.R."/>
            <person name="Palm C.J."/>
            <person name="Federspiel N.A."/>
            <person name="Kaul S."/>
            <person name="White O."/>
            <person name="Alonso J."/>
            <person name="Altafi H."/>
            <person name="Araujo R."/>
            <person name="Bowman C.L."/>
            <person name="Brooks S.Y."/>
            <person name="Buehler E."/>
            <person name="Chan A."/>
            <person name="Chao Q."/>
            <person name="Chen H."/>
            <person name="Cheuk R.F."/>
            <person name="Chin C.W."/>
            <person name="Chung M.K."/>
            <person name="Conn L."/>
            <person name="Conway A.B."/>
            <person name="Conway A.R."/>
            <person name="Creasy T.H."/>
            <person name="Dewar K."/>
            <person name="Dunn P."/>
            <person name="Etgu P."/>
            <person name="Feldblyum T.V."/>
            <person name="Feng J.-D."/>
            <person name="Fong B."/>
            <person name="Fujii C.Y."/>
            <person name="Gill J.E."/>
            <person name="Goldsmith A.D."/>
            <person name="Haas B."/>
            <person name="Hansen N.F."/>
            <person name="Hughes B."/>
            <person name="Huizar L."/>
            <person name="Hunter J.L."/>
            <person name="Jenkins J."/>
            <person name="Johnson-Hopson C."/>
            <person name="Khan S."/>
            <person name="Khaykin E."/>
            <person name="Kim C.J."/>
            <person name="Koo H.L."/>
            <person name="Kremenetskaia I."/>
            <person name="Kurtz D.B."/>
            <person name="Kwan A."/>
            <person name="Lam B."/>
            <person name="Langin-Hooper S."/>
            <person name="Lee A."/>
            <person name="Lee J.M."/>
            <person name="Lenz C.A."/>
            <person name="Li J.H."/>
            <person name="Li Y.-P."/>
            <person name="Lin X."/>
            <person name="Liu S.X."/>
            <person name="Liu Z.A."/>
            <person name="Luros J.S."/>
            <person name="Maiti R."/>
            <person name="Marziali A."/>
            <person name="Militscher J."/>
            <person name="Miranda M."/>
            <person name="Nguyen M."/>
            <person name="Nierman W.C."/>
            <person name="Osborne B.I."/>
            <person name="Pai G."/>
            <person name="Peterson J."/>
            <person name="Pham P.K."/>
            <person name="Rizzo M."/>
            <person name="Rooney T."/>
            <person name="Rowley D."/>
            <person name="Sakano H."/>
            <person name="Salzberg S.L."/>
            <person name="Schwartz J.R."/>
            <person name="Shinn P."/>
            <person name="Southwick A.M."/>
            <person name="Sun H."/>
            <person name="Tallon L.J."/>
            <person name="Tambunga G."/>
            <person name="Toriumi M.J."/>
            <person name="Town C.D."/>
            <person name="Utterback T."/>
            <person name="Van Aken S."/>
            <person name="Vaysberg M."/>
            <person name="Vysotskaia V.S."/>
            <person name="Walker M."/>
            <person name="Wu D."/>
            <person name="Yu G."/>
            <person name="Fraser C.M."/>
            <person name="Venter J.C."/>
            <person name="Davis R.W."/>
        </authorList>
    </citation>
    <scope>NUCLEOTIDE SEQUENCE [LARGE SCALE GENOMIC DNA]</scope>
    <source>
        <strain>cv. Columbia</strain>
    </source>
</reference>
<reference key="2">
    <citation type="journal article" date="2017" name="Plant J.">
        <title>Araport11: a complete reannotation of the Arabidopsis thaliana reference genome.</title>
        <authorList>
            <person name="Cheng C.Y."/>
            <person name="Krishnakumar V."/>
            <person name="Chan A.P."/>
            <person name="Thibaud-Nissen F."/>
            <person name="Schobel S."/>
            <person name="Town C.D."/>
        </authorList>
    </citation>
    <scope>GENOME REANNOTATION</scope>
    <source>
        <strain>cv. Columbia</strain>
    </source>
</reference>
<reference key="3">
    <citation type="journal article" date="2003" name="Science">
        <title>Empirical analysis of transcriptional activity in the Arabidopsis genome.</title>
        <authorList>
            <person name="Yamada K."/>
            <person name="Lim J."/>
            <person name="Dale J.M."/>
            <person name="Chen H."/>
            <person name="Shinn P."/>
            <person name="Palm C.J."/>
            <person name="Southwick A.M."/>
            <person name="Wu H.C."/>
            <person name="Kim C.J."/>
            <person name="Nguyen M."/>
            <person name="Pham P.K."/>
            <person name="Cheuk R.F."/>
            <person name="Karlin-Newmann G."/>
            <person name="Liu S.X."/>
            <person name="Lam B."/>
            <person name="Sakano H."/>
            <person name="Wu T."/>
            <person name="Yu G."/>
            <person name="Miranda M."/>
            <person name="Quach H.L."/>
            <person name="Tripp M."/>
            <person name="Chang C.H."/>
            <person name="Lee J.M."/>
            <person name="Toriumi M.J."/>
            <person name="Chan M.M."/>
            <person name="Tang C.C."/>
            <person name="Onodera C.S."/>
            <person name="Deng J.M."/>
            <person name="Akiyama K."/>
            <person name="Ansari Y."/>
            <person name="Arakawa T."/>
            <person name="Banh J."/>
            <person name="Banno F."/>
            <person name="Bowser L."/>
            <person name="Brooks S.Y."/>
            <person name="Carninci P."/>
            <person name="Chao Q."/>
            <person name="Choy N."/>
            <person name="Enju A."/>
            <person name="Goldsmith A.D."/>
            <person name="Gurjal M."/>
            <person name="Hansen N.F."/>
            <person name="Hayashizaki Y."/>
            <person name="Johnson-Hopson C."/>
            <person name="Hsuan V.W."/>
            <person name="Iida K."/>
            <person name="Karnes M."/>
            <person name="Khan S."/>
            <person name="Koesema E."/>
            <person name="Ishida J."/>
            <person name="Jiang P.X."/>
            <person name="Jones T."/>
            <person name="Kawai J."/>
            <person name="Kamiya A."/>
            <person name="Meyers C."/>
            <person name="Nakajima M."/>
            <person name="Narusaka M."/>
            <person name="Seki M."/>
            <person name="Sakurai T."/>
            <person name="Satou M."/>
            <person name="Tamse R."/>
            <person name="Vaysberg M."/>
            <person name="Wallender E.K."/>
            <person name="Wong C."/>
            <person name="Yamamura Y."/>
            <person name="Yuan S."/>
            <person name="Shinozaki K."/>
            <person name="Davis R.W."/>
            <person name="Theologis A."/>
            <person name="Ecker J.R."/>
        </authorList>
    </citation>
    <scope>NUCLEOTIDE SEQUENCE [LARGE SCALE MRNA] (ISOFORM 1)</scope>
    <source>
        <strain>cv. Columbia</strain>
    </source>
</reference>
<reference key="4">
    <citation type="submission" date="2006-04" db="EMBL/GenBank/DDBJ databases">
        <title>Arabidopsis ORF clones.</title>
        <authorList>
            <person name="Shinn P."/>
            <person name="Chen H."/>
            <person name="Kim C.J."/>
            <person name="Quinitio C."/>
            <person name="Ecker J.R."/>
        </authorList>
    </citation>
    <scope>NUCLEOTIDE SEQUENCE [LARGE SCALE MRNA] (ISOFORM 1)</scope>
    <source>
        <strain>cv. Columbia</strain>
    </source>
</reference>
<reference key="5">
    <citation type="submission" date="2006-07" db="EMBL/GenBank/DDBJ databases">
        <title>Large-scale analysis of RIKEN Arabidopsis full-length (RAFL) cDNAs.</title>
        <authorList>
            <person name="Totoki Y."/>
            <person name="Seki M."/>
            <person name="Ishida J."/>
            <person name="Nakajima M."/>
            <person name="Enju A."/>
            <person name="Kamiya A."/>
            <person name="Narusaka M."/>
            <person name="Shin-i T."/>
            <person name="Nakagawa M."/>
            <person name="Sakamoto N."/>
            <person name="Oishi K."/>
            <person name="Kohara Y."/>
            <person name="Kobayashi M."/>
            <person name="Toyoda A."/>
            <person name="Sakaki Y."/>
            <person name="Sakurai T."/>
            <person name="Iida K."/>
            <person name="Akiyama K."/>
            <person name="Satou M."/>
            <person name="Toyoda T."/>
            <person name="Konagaya A."/>
            <person name="Carninci P."/>
            <person name="Kawai J."/>
            <person name="Hayashizaki Y."/>
            <person name="Shinozaki K."/>
        </authorList>
    </citation>
    <scope>NUCLEOTIDE SEQUENCE [LARGE SCALE MRNA] (ISOFORMS 1 AND 2)</scope>
    <source>
        <strain>cv. Columbia</strain>
    </source>
</reference>
<reference key="6">
    <citation type="submission" date="2002-03" db="EMBL/GenBank/DDBJ databases">
        <title>Full-length cDNA from Arabidopsis thaliana.</title>
        <authorList>
            <person name="Brover V.V."/>
            <person name="Troukhan M.E."/>
            <person name="Alexandrov N.A."/>
            <person name="Lu Y.-P."/>
            <person name="Flavell R.B."/>
            <person name="Feldmann K.A."/>
        </authorList>
    </citation>
    <scope>NUCLEOTIDE SEQUENCE [LARGE SCALE MRNA] (ISOFORM 1)</scope>
</reference>
<reference key="7">
    <citation type="journal article" date="2003" name="Mol. Cell. Proteomics">
        <title>Large-scale analysis of in vivo phosphorylated membrane proteins by immobilized metal ion affinity chromatography and mass spectrometry.</title>
        <authorList>
            <person name="Nuehse T.S."/>
            <person name="Stensballe A."/>
            <person name="Jensen O.N."/>
            <person name="Peck S.C."/>
        </authorList>
    </citation>
    <scope>IDENTIFICATION BY MASS SPECTROMETRY [LARGE SCALE ANALYSIS]</scope>
    <source>
        <strain>cv. La-0</strain>
    </source>
</reference>
<reference key="8">
    <citation type="journal article" date="2004" name="Plant Cell">
        <title>Phosphoproteomics of the Arabidopsis plasma membrane and a new phosphorylation site database.</title>
        <authorList>
            <person name="Nuehse T.S."/>
            <person name="Stensballe A."/>
            <person name="Jensen O.N."/>
            <person name="Peck S.C."/>
        </authorList>
    </citation>
    <scope>IDENTIFICATION BY MASS SPECTROMETRY [LARGE SCALE ANALYSIS]</scope>
</reference>
<reference key="9">
    <citation type="journal article" date="2008" name="Plant Physiol.">
        <title>Inactive methyl indole-3-acetic acid ester can be hydrolyzed and activated by several esterases belonging to the AtMES esterase family of Arabidopsis.</title>
        <authorList>
            <person name="Yang Y."/>
            <person name="Xu R."/>
            <person name="Ma C.J."/>
            <person name="Vlot A.C."/>
            <person name="Klessig D.F."/>
            <person name="Pichersky E."/>
        </authorList>
    </citation>
    <scope>GENE FAMILY</scope>
</reference>
<reference key="10">
    <citation type="journal article" date="2009" name="J. Proteomics">
        <title>Phosphoproteomic analysis of nuclei-enriched fractions from Arabidopsis thaliana.</title>
        <authorList>
            <person name="Jones A.M.E."/>
            <person name="MacLean D."/>
            <person name="Studholme D.J."/>
            <person name="Serna-Sanz A."/>
            <person name="Andreasson E."/>
            <person name="Rathjen J.P."/>
            <person name="Peck S.C."/>
        </authorList>
    </citation>
    <scope>IDENTIFICATION BY MASS SPECTROMETRY [LARGE SCALE ANALYSIS]</scope>
    <source>
        <strain>cv. Columbia</strain>
    </source>
</reference>
<reference key="11">
    <citation type="journal article" date="2009" name="Plant Physiol.">
        <title>Large-scale Arabidopsis phosphoproteome profiling reveals novel chloroplast kinase substrates and phosphorylation networks.</title>
        <authorList>
            <person name="Reiland S."/>
            <person name="Messerli G."/>
            <person name="Baerenfaller K."/>
            <person name="Gerrits B."/>
            <person name="Endler A."/>
            <person name="Grossmann J."/>
            <person name="Gruissem W."/>
            <person name="Baginsky S."/>
        </authorList>
    </citation>
    <scope>PHOSPHORYLATION [LARGE SCALE ANALYSIS] AT SER-77</scope>
    <scope>IDENTIFICATION BY MASS SPECTROMETRY [LARGE SCALE ANALYSIS]</scope>
</reference>
<organism>
    <name type="scientific">Arabidopsis thaliana</name>
    <name type="common">Mouse-ear cress</name>
    <dbReference type="NCBI Taxonomy" id="3702"/>
    <lineage>
        <taxon>Eukaryota</taxon>
        <taxon>Viridiplantae</taxon>
        <taxon>Streptophyta</taxon>
        <taxon>Embryophyta</taxon>
        <taxon>Tracheophyta</taxon>
        <taxon>Spermatophyta</taxon>
        <taxon>Magnoliopsida</taxon>
        <taxon>eudicotyledons</taxon>
        <taxon>Gunneridae</taxon>
        <taxon>Pentapetalae</taxon>
        <taxon>rosids</taxon>
        <taxon>malvids</taxon>
        <taxon>Brassicales</taxon>
        <taxon>Brassicaceae</taxon>
        <taxon>Camelineae</taxon>
        <taxon>Arabidopsis</taxon>
    </lineage>
</organism>
<comment type="function">
    <text>Putative methylesterase.</text>
</comment>
<comment type="subcellular location">
    <subcellularLocation>
        <location evidence="7">Plastid</location>
        <location evidence="7">Chloroplast</location>
    </subcellularLocation>
</comment>
<comment type="alternative products">
    <event type="alternative splicing"/>
    <isoform>
        <id>Q9FVW3-1</id>
        <name>1</name>
        <sequence type="displayed"/>
    </isoform>
    <isoform>
        <id>Q9FVW3-2</id>
        <name>2</name>
        <sequence type="described" ref="VSP_028264 VSP_028265"/>
    </isoform>
</comment>
<comment type="similarity">
    <text evidence="7">Belongs to the AB hydrolase superfamily. Methylesterase family.</text>
</comment>
<comment type="sequence caution" evidence="7">
    <conflict type="erroneous gene model prediction">
        <sequence resource="EMBL-CDS" id="AAG12536"/>
    </conflict>
</comment>
<evidence type="ECO:0000250" key="1">
    <source>
        <dbReference type="UniProtKB" id="Q6RYA0"/>
    </source>
</evidence>
<evidence type="ECO:0000250" key="2">
    <source>
        <dbReference type="UniProtKB" id="Q9SG92"/>
    </source>
</evidence>
<evidence type="ECO:0000255" key="3"/>
<evidence type="ECO:0000256" key="4">
    <source>
        <dbReference type="SAM" id="MobiDB-lite"/>
    </source>
</evidence>
<evidence type="ECO:0000303" key="5">
    <source>
    </source>
</evidence>
<evidence type="ECO:0000303" key="6">
    <source ref="5"/>
</evidence>
<evidence type="ECO:0000305" key="7"/>
<evidence type="ECO:0000312" key="8">
    <source>
        <dbReference type="Araport" id="AT1G33990"/>
    </source>
</evidence>
<evidence type="ECO:0000312" key="9">
    <source>
        <dbReference type="EMBL" id="AAG12536.1"/>
    </source>
</evidence>
<evidence type="ECO:0000312" key="10">
    <source>
        <dbReference type="EMBL" id="AAG12848.1"/>
    </source>
</evidence>
<evidence type="ECO:0007744" key="11">
    <source>
    </source>
</evidence>
<dbReference type="EC" id="3.1.1.-" evidence="2"/>
<dbReference type="EMBL" id="AC015446">
    <property type="protein sequence ID" value="AAG12536.1"/>
    <property type="status" value="ALT_SEQ"/>
    <property type="molecule type" value="Genomic_DNA"/>
</dbReference>
<dbReference type="EMBL" id="AC079286">
    <property type="protein sequence ID" value="AAG12848.1"/>
    <property type="molecule type" value="Genomic_DNA"/>
</dbReference>
<dbReference type="EMBL" id="CP002684">
    <property type="protein sequence ID" value="AEE31655.1"/>
    <property type="molecule type" value="Genomic_DNA"/>
</dbReference>
<dbReference type="EMBL" id="AF424607">
    <property type="protein sequence ID" value="AAL11601.1"/>
    <property type="molecule type" value="mRNA"/>
</dbReference>
<dbReference type="EMBL" id="BT025240">
    <property type="protein sequence ID" value="ABF18993.1"/>
    <property type="molecule type" value="mRNA"/>
</dbReference>
<dbReference type="EMBL" id="AK221080">
    <property type="protein sequence ID" value="BAD94918.1"/>
    <property type="molecule type" value="mRNA"/>
</dbReference>
<dbReference type="EMBL" id="AK226919">
    <property type="protein sequence ID" value="BAE98993.1"/>
    <property type="molecule type" value="mRNA"/>
</dbReference>
<dbReference type="EMBL" id="AY088607">
    <property type="protein sequence ID" value="AAM66136.1"/>
    <property type="molecule type" value="mRNA"/>
</dbReference>
<dbReference type="PIR" id="F86463">
    <property type="entry name" value="F86463"/>
</dbReference>
<dbReference type="RefSeq" id="NP_174661.1">
    <molecule id="Q9FVW3-1"/>
    <property type="nucleotide sequence ID" value="NM_103121.4"/>
</dbReference>
<dbReference type="SMR" id="Q9FVW3"/>
<dbReference type="FunCoup" id="Q9FVW3">
    <property type="interactions" value="109"/>
</dbReference>
<dbReference type="STRING" id="3702.Q9FVW3"/>
<dbReference type="ESTHER" id="arath-MES14">
    <property type="family name" value="Hydroxynitrile_lyase"/>
</dbReference>
<dbReference type="MEROPS" id="S33.A69"/>
<dbReference type="iPTMnet" id="Q9FVW3"/>
<dbReference type="PaxDb" id="3702-AT1G33990.1"/>
<dbReference type="ProteomicsDB" id="250644">
    <molecule id="Q9FVW3-1"/>
</dbReference>
<dbReference type="EnsemblPlants" id="AT1G33990.1">
    <molecule id="Q9FVW3-1"/>
    <property type="protein sequence ID" value="AT1G33990.1"/>
    <property type="gene ID" value="AT1G33990"/>
</dbReference>
<dbReference type="GeneID" id="840296"/>
<dbReference type="Gramene" id="AT1G33990.1">
    <molecule id="Q9FVW3-1"/>
    <property type="protein sequence ID" value="AT1G33990.1"/>
    <property type="gene ID" value="AT1G33990"/>
</dbReference>
<dbReference type="KEGG" id="ath:AT1G33990"/>
<dbReference type="Araport" id="AT1G33990"/>
<dbReference type="TAIR" id="AT1G33990">
    <property type="gene designation" value="MES14"/>
</dbReference>
<dbReference type="eggNOG" id="ENOG502QRMV">
    <property type="taxonomic scope" value="Eukaryota"/>
</dbReference>
<dbReference type="HOGENOM" id="CLU_046066_8_0_1"/>
<dbReference type="InParanoid" id="Q9FVW3"/>
<dbReference type="OMA" id="PTHVHQL"/>
<dbReference type="OrthoDB" id="1263307at2759"/>
<dbReference type="PhylomeDB" id="Q9FVW3"/>
<dbReference type="BioCyc" id="ARA:AT1G33990-MONOMER"/>
<dbReference type="PRO" id="PR:Q9FVW3"/>
<dbReference type="Proteomes" id="UP000006548">
    <property type="component" value="Chromosome 1"/>
</dbReference>
<dbReference type="ExpressionAtlas" id="Q9FVW3">
    <property type="expression patterns" value="baseline and differential"/>
</dbReference>
<dbReference type="GO" id="GO:0009507">
    <property type="term" value="C:chloroplast"/>
    <property type="evidence" value="ECO:0007669"/>
    <property type="project" value="UniProtKB-SubCell"/>
</dbReference>
<dbReference type="GO" id="GO:0005886">
    <property type="term" value="C:plasma membrane"/>
    <property type="evidence" value="ECO:0007005"/>
    <property type="project" value="TAIR"/>
</dbReference>
<dbReference type="GO" id="GO:0016787">
    <property type="term" value="F:hydrolase activity"/>
    <property type="evidence" value="ECO:0007669"/>
    <property type="project" value="UniProtKB-KW"/>
</dbReference>
<dbReference type="FunFam" id="3.40.50.1820:FF:000025">
    <property type="entry name" value="putative methylesterase 11, chloroplastic"/>
    <property type="match status" value="1"/>
</dbReference>
<dbReference type="Gene3D" id="3.40.50.1820">
    <property type="entry name" value="alpha/beta hydrolase"/>
    <property type="match status" value="1"/>
</dbReference>
<dbReference type="InterPro" id="IPR000073">
    <property type="entry name" value="AB_hydrolase_1"/>
</dbReference>
<dbReference type="InterPro" id="IPR029058">
    <property type="entry name" value="AB_hydrolase_fold"/>
</dbReference>
<dbReference type="InterPro" id="IPR045889">
    <property type="entry name" value="MES/HNL"/>
</dbReference>
<dbReference type="PANTHER" id="PTHR10992:SF785">
    <property type="entry name" value="METHYLESTERASE 14, CHLOROPLASTIC-RELATED"/>
    <property type="match status" value="1"/>
</dbReference>
<dbReference type="PANTHER" id="PTHR10992">
    <property type="entry name" value="METHYLESTERASE FAMILY MEMBER"/>
    <property type="match status" value="1"/>
</dbReference>
<dbReference type="Pfam" id="PF12697">
    <property type="entry name" value="Abhydrolase_6"/>
    <property type="match status" value="1"/>
</dbReference>
<dbReference type="SUPFAM" id="SSF53474">
    <property type="entry name" value="alpha/beta-Hydrolases"/>
    <property type="match status" value="1"/>
</dbReference>
<dbReference type="PROSITE" id="PS00120">
    <property type="entry name" value="LIPASE_SER"/>
    <property type="match status" value="1"/>
</dbReference>
<gene>
    <name evidence="5" type="primary">MES14</name>
    <name evidence="8" type="ordered locus">At1g33990</name>
    <name evidence="9" type="ORF">F12G12.19</name>
    <name evidence="9" type="ORF">F12G12.220</name>
    <name evidence="10" type="ORF">T15K4.4</name>
</gene>
<keyword id="KW-0025">Alternative splicing</keyword>
<keyword id="KW-0150">Chloroplast</keyword>
<keyword id="KW-0378">Hydrolase</keyword>
<keyword id="KW-0597">Phosphoprotein</keyword>
<keyword id="KW-0934">Plastid</keyword>
<keyword id="KW-1185">Reference proteome</keyword>
<keyword id="KW-0809">Transit peptide</keyword>
<sequence length="348" mass="38855">MGNKIISMMKKDSKDGGGGGSKSKRMNRSQRKLLADEEMLHRRALSMAIHQAQLSQRFDGSMSRRVGSTSTRKRTLSDPFSNGKQVPDFSESLIVKKFVLVHGEGFGAWCWYKMVASLEESGLSPVTVDLTGCGFNMTDTNTVSTLEEYSKPLIDLLENLPEEEKVILVGHSTGGASISYALERFPEKISKAIFVCATMVSDGQRPFDVFSEELGSAERFMKESQFLIYGNGKDKPPTGFMFEKPHMKGLYFNQSPNKDIALAMISMRPVPLGPMMEKVSLTAERYGKGRRFYVQTLDDRALSPDVQEKLVRENSPEGVFKIKGSDHCPFFSKPQSLHKILLEIAQIP</sequence>
<protein>
    <recommendedName>
        <fullName evidence="5">Putative methylesterase 14, chloroplastic</fullName>
        <shortName evidence="5">AtMES14</shortName>
        <ecNumber evidence="2">3.1.1.-</ecNumber>
    </recommendedName>
</protein>
<name>MES14_ARATH</name>
<feature type="transit peptide" description="Chloroplast" evidence="3">
    <location>
        <begin position="1"/>
        <end position="76"/>
    </location>
</feature>
<feature type="chain" id="PRO_0000305193" description="Putative methylesterase 14, chloroplastic">
    <location>
        <begin position="77"/>
        <end position="348"/>
    </location>
</feature>
<feature type="region of interest" description="Disordered" evidence="4">
    <location>
        <begin position="1"/>
        <end position="29"/>
    </location>
</feature>
<feature type="region of interest" description="Disordered" evidence="4">
    <location>
        <begin position="60"/>
        <end position="80"/>
    </location>
</feature>
<feature type="active site" description="Acyl-ester intermediate" evidence="1">
    <location>
        <position position="172"/>
    </location>
</feature>
<feature type="active site" description="Charge relay system" evidence="1">
    <location>
        <position position="299"/>
    </location>
</feature>
<feature type="active site" description="Charge relay system" evidence="1">
    <location>
        <position position="327"/>
    </location>
</feature>
<feature type="modified residue" description="Phosphoserine" evidence="11">
    <location>
        <position position="77"/>
    </location>
</feature>
<feature type="splice variant" id="VSP_028264" description="In isoform 2." evidence="6">
    <location>
        <begin position="1"/>
        <end position="254"/>
    </location>
</feature>
<feature type="splice variant" id="VSP_028265" description="In isoform 2." evidence="6">
    <original>SPNK</original>
    <variation>MVLQ</variation>
    <location>
        <begin position="255"/>
        <end position="258"/>
    </location>
</feature>
<feature type="sequence conflict" description="In Ref. 6; AAM66136." evidence="7" ref="6">
    <location>
        <position position="16"/>
    </location>
</feature>
<accession>Q9FVW3</accession>
<accession>Q56Z89</accession>
<accession>Q8L971</accession>
<accession>Q9FX11</accession>